<sequence length="129" mass="13908">MGKETTRIRRRERKNIASGIAHVNSSFNNTTITITDAQGNAIAWSSAGTMGFKGSRKSTPYAAQVAAEDVAKKAQEHGMRTLEVEVAGPGSGRESALRALQAAGFTVTSIRDVTTIPHNGCRPRKRRRV</sequence>
<evidence type="ECO:0000255" key="1">
    <source>
        <dbReference type="HAMAP-Rule" id="MF_01310"/>
    </source>
</evidence>
<evidence type="ECO:0000305" key="2"/>
<name>RS11_RHOPS</name>
<comment type="function">
    <text evidence="1">Located on the platform of the 30S subunit, it bridges several disparate RNA helices of the 16S rRNA. Forms part of the Shine-Dalgarno cleft in the 70S ribosome.</text>
</comment>
<comment type="subunit">
    <text evidence="1">Part of the 30S ribosomal subunit. Interacts with proteins S7 and S18. Binds to IF-3.</text>
</comment>
<comment type="similarity">
    <text evidence="1">Belongs to the universal ribosomal protein uS11 family.</text>
</comment>
<gene>
    <name evidence="1" type="primary">rpsK</name>
    <name type="ordered locus">RPD_3161</name>
</gene>
<accession>Q134V2</accession>
<keyword id="KW-0687">Ribonucleoprotein</keyword>
<keyword id="KW-0689">Ribosomal protein</keyword>
<keyword id="KW-0694">RNA-binding</keyword>
<keyword id="KW-0699">rRNA-binding</keyword>
<organism>
    <name type="scientific">Rhodopseudomonas palustris (strain BisB5)</name>
    <dbReference type="NCBI Taxonomy" id="316057"/>
    <lineage>
        <taxon>Bacteria</taxon>
        <taxon>Pseudomonadati</taxon>
        <taxon>Pseudomonadota</taxon>
        <taxon>Alphaproteobacteria</taxon>
        <taxon>Hyphomicrobiales</taxon>
        <taxon>Nitrobacteraceae</taxon>
        <taxon>Rhodopseudomonas</taxon>
    </lineage>
</organism>
<dbReference type="EMBL" id="CP000283">
    <property type="protein sequence ID" value="ABE40387.1"/>
    <property type="molecule type" value="Genomic_DNA"/>
</dbReference>
<dbReference type="SMR" id="Q134V2"/>
<dbReference type="STRING" id="316057.RPD_3161"/>
<dbReference type="KEGG" id="rpd:RPD_3161"/>
<dbReference type="eggNOG" id="COG0100">
    <property type="taxonomic scope" value="Bacteria"/>
</dbReference>
<dbReference type="HOGENOM" id="CLU_072439_5_0_5"/>
<dbReference type="BioCyc" id="RPAL316057:RPD_RS15870-MONOMER"/>
<dbReference type="Proteomes" id="UP000001818">
    <property type="component" value="Chromosome"/>
</dbReference>
<dbReference type="GO" id="GO:1990904">
    <property type="term" value="C:ribonucleoprotein complex"/>
    <property type="evidence" value="ECO:0007669"/>
    <property type="project" value="UniProtKB-KW"/>
</dbReference>
<dbReference type="GO" id="GO:0005840">
    <property type="term" value="C:ribosome"/>
    <property type="evidence" value="ECO:0007669"/>
    <property type="project" value="UniProtKB-KW"/>
</dbReference>
<dbReference type="GO" id="GO:0019843">
    <property type="term" value="F:rRNA binding"/>
    <property type="evidence" value="ECO:0007669"/>
    <property type="project" value="UniProtKB-UniRule"/>
</dbReference>
<dbReference type="GO" id="GO:0003735">
    <property type="term" value="F:structural constituent of ribosome"/>
    <property type="evidence" value="ECO:0007669"/>
    <property type="project" value="InterPro"/>
</dbReference>
<dbReference type="GO" id="GO:0006412">
    <property type="term" value="P:translation"/>
    <property type="evidence" value="ECO:0007669"/>
    <property type="project" value="UniProtKB-UniRule"/>
</dbReference>
<dbReference type="FunFam" id="3.30.420.80:FF:000001">
    <property type="entry name" value="30S ribosomal protein S11"/>
    <property type="match status" value="1"/>
</dbReference>
<dbReference type="Gene3D" id="3.30.420.80">
    <property type="entry name" value="Ribosomal protein S11"/>
    <property type="match status" value="1"/>
</dbReference>
<dbReference type="HAMAP" id="MF_01310">
    <property type="entry name" value="Ribosomal_uS11"/>
    <property type="match status" value="1"/>
</dbReference>
<dbReference type="InterPro" id="IPR001971">
    <property type="entry name" value="Ribosomal_uS11"/>
</dbReference>
<dbReference type="InterPro" id="IPR019981">
    <property type="entry name" value="Ribosomal_uS11_bac-type"/>
</dbReference>
<dbReference type="InterPro" id="IPR036967">
    <property type="entry name" value="Ribosomal_uS11_sf"/>
</dbReference>
<dbReference type="NCBIfam" id="NF003698">
    <property type="entry name" value="PRK05309.1"/>
    <property type="match status" value="1"/>
</dbReference>
<dbReference type="NCBIfam" id="TIGR03632">
    <property type="entry name" value="uS11_bact"/>
    <property type="match status" value="1"/>
</dbReference>
<dbReference type="PANTHER" id="PTHR11759">
    <property type="entry name" value="40S RIBOSOMAL PROTEIN S14/30S RIBOSOMAL PROTEIN S11"/>
    <property type="match status" value="1"/>
</dbReference>
<dbReference type="Pfam" id="PF00411">
    <property type="entry name" value="Ribosomal_S11"/>
    <property type="match status" value="1"/>
</dbReference>
<dbReference type="PIRSF" id="PIRSF002131">
    <property type="entry name" value="Ribosomal_S11"/>
    <property type="match status" value="1"/>
</dbReference>
<dbReference type="SUPFAM" id="SSF53137">
    <property type="entry name" value="Translational machinery components"/>
    <property type="match status" value="1"/>
</dbReference>
<proteinExistence type="inferred from homology"/>
<protein>
    <recommendedName>
        <fullName evidence="1">Small ribosomal subunit protein uS11</fullName>
    </recommendedName>
    <alternativeName>
        <fullName evidence="2">30S ribosomal protein S11</fullName>
    </alternativeName>
</protein>
<reference key="1">
    <citation type="submission" date="2006-03" db="EMBL/GenBank/DDBJ databases">
        <title>Complete sequence of Rhodopseudomonas palustris BisB5.</title>
        <authorList>
            <consortium name="US DOE Joint Genome Institute"/>
            <person name="Copeland A."/>
            <person name="Lucas S."/>
            <person name="Lapidus A."/>
            <person name="Barry K."/>
            <person name="Detter J.C."/>
            <person name="Glavina del Rio T."/>
            <person name="Hammon N."/>
            <person name="Israni S."/>
            <person name="Dalin E."/>
            <person name="Tice H."/>
            <person name="Pitluck S."/>
            <person name="Chain P."/>
            <person name="Malfatti S."/>
            <person name="Shin M."/>
            <person name="Vergez L."/>
            <person name="Schmutz J."/>
            <person name="Larimer F."/>
            <person name="Land M."/>
            <person name="Hauser L."/>
            <person name="Pelletier D.A."/>
            <person name="Kyrpides N."/>
            <person name="Lykidis A."/>
            <person name="Oda Y."/>
            <person name="Harwood C.S."/>
            <person name="Richardson P."/>
        </authorList>
    </citation>
    <scope>NUCLEOTIDE SEQUENCE [LARGE SCALE GENOMIC DNA]</scope>
    <source>
        <strain>BisB5</strain>
    </source>
</reference>
<feature type="chain" id="PRO_0000294840" description="Small ribosomal subunit protein uS11">
    <location>
        <begin position="1"/>
        <end position="129"/>
    </location>
</feature>